<protein>
    <recommendedName>
        <fullName evidence="5">Kinesin-like protein KIN-7H</fullName>
    </recommendedName>
</protein>
<proteinExistence type="evidence at transcript level"/>
<organism>
    <name type="scientific">Arabidopsis thaliana</name>
    <name type="common">Mouse-ear cress</name>
    <dbReference type="NCBI Taxonomy" id="3702"/>
    <lineage>
        <taxon>Eukaryota</taxon>
        <taxon>Viridiplantae</taxon>
        <taxon>Streptophyta</taxon>
        <taxon>Embryophyta</taxon>
        <taxon>Tracheophyta</taxon>
        <taxon>Spermatophyta</taxon>
        <taxon>Magnoliopsida</taxon>
        <taxon>eudicotyledons</taxon>
        <taxon>Gunneridae</taxon>
        <taxon>Pentapetalae</taxon>
        <taxon>rosids</taxon>
        <taxon>malvids</taxon>
        <taxon>Brassicales</taxon>
        <taxon>Brassicaceae</taxon>
        <taxon>Camelineae</taxon>
        <taxon>Arabidopsis</taxon>
    </lineage>
</organism>
<name>KN7H_ARATH</name>
<gene>
    <name evidence="5" type="primary">KIN7H</name>
    <name evidence="6" type="ordered locus">At5g66310</name>
    <name evidence="7" type="ORF">K1L20.9</name>
</gene>
<dbReference type="EMBL" id="AB022211">
    <property type="protein sequence ID" value="BAB10710.1"/>
    <property type="status" value="ALT_SEQ"/>
    <property type="molecule type" value="Genomic_DNA"/>
</dbReference>
<dbReference type="EMBL" id="CP002688">
    <property type="protein sequence ID" value="AED98197.1"/>
    <property type="molecule type" value="Genomic_DNA"/>
</dbReference>
<dbReference type="EMBL" id="CP002688">
    <property type="protein sequence ID" value="ANM68962.1"/>
    <property type="molecule type" value="Genomic_DNA"/>
</dbReference>
<dbReference type="EMBL" id="CP002688">
    <property type="protein sequence ID" value="ANM68963.1"/>
    <property type="molecule type" value="Genomic_DNA"/>
</dbReference>
<dbReference type="EMBL" id="AF372930">
    <property type="protein sequence ID" value="AAK50070.1"/>
    <property type="molecule type" value="mRNA"/>
</dbReference>
<dbReference type="RefSeq" id="NP_001318888.1">
    <property type="nucleotide sequence ID" value="NM_001345755.1"/>
</dbReference>
<dbReference type="RefSeq" id="NP_001330675.1">
    <property type="nucleotide sequence ID" value="NM_001345756.1"/>
</dbReference>
<dbReference type="RefSeq" id="NP_201432.2">
    <property type="nucleotide sequence ID" value="NM_126029.3"/>
</dbReference>
<dbReference type="SMR" id="F4JZ68"/>
<dbReference type="FunCoup" id="F4JZ68">
    <property type="interactions" value="117"/>
</dbReference>
<dbReference type="IntAct" id="F4JZ68">
    <property type="interactions" value="1"/>
</dbReference>
<dbReference type="STRING" id="3702.F4JZ68"/>
<dbReference type="iPTMnet" id="F4JZ68"/>
<dbReference type="PaxDb" id="3702-AT5G66310.1"/>
<dbReference type="ProteomicsDB" id="238207"/>
<dbReference type="EnsemblPlants" id="AT5G66310.1">
    <property type="protein sequence ID" value="AT5G66310.1"/>
    <property type="gene ID" value="AT5G66310"/>
</dbReference>
<dbReference type="EnsemblPlants" id="AT5G66310.2">
    <property type="protein sequence ID" value="AT5G66310.2"/>
    <property type="gene ID" value="AT5G66310"/>
</dbReference>
<dbReference type="EnsemblPlants" id="AT5G66310.3">
    <property type="protein sequence ID" value="AT5G66310.3"/>
    <property type="gene ID" value="AT5G66310"/>
</dbReference>
<dbReference type="GeneID" id="836763"/>
<dbReference type="Gramene" id="AT5G66310.1">
    <property type="protein sequence ID" value="AT5G66310.1"/>
    <property type="gene ID" value="AT5G66310"/>
</dbReference>
<dbReference type="Gramene" id="AT5G66310.2">
    <property type="protein sequence ID" value="AT5G66310.2"/>
    <property type="gene ID" value="AT5G66310"/>
</dbReference>
<dbReference type="Gramene" id="AT5G66310.3">
    <property type="protein sequence ID" value="AT5G66310.3"/>
    <property type="gene ID" value="AT5G66310"/>
</dbReference>
<dbReference type="KEGG" id="ath:AT5G66310"/>
<dbReference type="Araport" id="AT5G66310"/>
<dbReference type="TAIR" id="AT5G66310"/>
<dbReference type="eggNOG" id="KOG0242">
    <property type="taxonomic scope" value="Eukaryota"/>
</dbReference>
<dbReference type="HOGENOM" id="CLU_013407_0_0_1"/>
<dbReference type="InParanoid" id="F4JZ68"/>
<dbReference type="OMA" id="LEHQYPK"/>
<dbReference type="PRO" id="PR:F4JZ68"/>
<dbReference type="Proteomes" id="UP000006548">
    <property type="component" value="Chromosome 5"/>
</dbReference>
<dbReference type="ExpressionAtlas" id="F4JZ68">
    <property type="expression patterns" value="baseline and differential"/>
</dbReference>
<dbReference type="GO" id="GO:0005874">
    <property type="term" value="C:microtubule"/>
    <property type="evidence" value="ECO:0007669"/>
    <property type="project" value="UniProtKB-KW"/>
</dbReference>
<dbReference type="GO" id="GO:0009506">
    <property type="term" value="C:plasmodesma"/>
    <property type="evidence" value="ECO:0007005"/>
    <property type="project" value="TAIR"/>
</dbReference>
<dbReference type="GO" id="GO:0005524">
    <property type="term" value="F:ATP binding"/>
    <property type="evidence" value="ECO:0007669"/>
    <property type="project" value="UniProtKB-KW"/>
</dbReference>
<dbReference type="GO" id="GO:0008017">
    <property type="term" value="F:microtubule binding"/>
    <property type="evidence" value="ECO:0007669"/>
    <property type="project" value="InterPro"/>
</dbReference>
<dbReference type="GO" id="GO:0003777">
    <property type="term" value="F:microtubule motor activity"/>
    <property type="evidence" value="ECO:0007669"/>
    <property type="project" value="InterPro"/>
</dbReference>
<dbReference type="GO" id="GO:0007018">
    <property type="term" value="P:microtubule-based movement"/>
    <property type="evidence" value="ECO:0007669"/>
    <property type="project" value="InterPro"/>
</dbReference>
<dbReference type="CDD" id="cd01374">
    <property type="entry name" value="KISc_CENP_E"/>
    <property type="match status" value="1"/>
</dbReference>
<dbReference type="FunFam" id="3.40.850.10:FF:000016">
    <property type="entry name" value="Kinesin-like protein"/>
    <property type="match status" value="1"/>
</dbReference>
<dbReference type="Gene3D" id="3.40.850.10">
    <property type="entry name" value="Kinesin motor domain"/>
    <property type="match status" value="1"/>
</dbReference>
<dbReference type="InterPro" id="IPR027640">
    <property type="entry name" value="Kinesin-like_fam"/>
</dbReference>
<dbReference type="InterPro" id="IPR019821">
    <property type="entry name" value="Kinesin_motor_CS"/>
</dbReference>
<dbReference type="InterPro" id="IPR001752">
    <property type="entry name" value="Kinesin_motor_dom"/>
</dbReference>
<dbReference type="InterPro" id="IPR036961">
    <property type="entry name" value="Kinesin_motor_dom_sf"/>
</dbReference>
<dbReference type="InterPro" id="IPR021881">
    <property type="entry name" value="NACK_C"/>
</dbReference>
<dbReference type="InterPro" id="IPR027417">
    <property type="entry name" value="P-loop_NTPase"/>
</dbReference>
<dbReference type="PANTHER" id="PTHR47968">
    <property type="entry name" value="CENTROMERE PROTEIN E"/>
    <property type="match status" value="1"/>
</dbReference>
<dbReference type="PANTHER" id="PTHR47968:SF55">
    <property type="entry name" value="KINESIN-LIKE PROTEIN KIN-7H"/>
    <property type="match status" value="1"/>
</dbReference>
<dbReference type="Pfam" id="PF11995">
    <property type="entry name" value="DUF3490"/>
    <property type="match status" value="1"/>
</dbReference>
<dbReference type="Pfam" id="PF00225">
    <property type="entry name" value="Kinesin"/>
    <property type="match status" value="1"/>
</dbReference>
<dbReference type="PRINTS" id="PR00380">
    <property type="entry name" value="KINESINHEAVY"/>
</dbReference>
<dbReference type="SMART" id="SM00129">
    <property type="entry name" value="KISc"/>
    <property type="match status" value="1"/>
</dbReference>
<dbReference type="SUPFAM" id="SSF52540">
    <property type="entry name" value="P-loop containing nucleoside triphosphate hydrolases"/>
    <property type="match status" value="1"/>
</dbReference>
<dbReference type="PROSITE" id="PS00411">
    <property type="entry name" value="KINESIN_MOTOR_1"/>
    <property type="match status" value="1"/>
</dbReference>
<dbReference type="PROSITE" id="PS50067">
    <property type="entry name" value="KINESIN_MOTOR_2"/>
    <property type="match status" value="1"/>
</dbReference>
<feature type="chain" id="PRO_0000436466" description="Kinesin-like protein KIN-7H">
    <location>
        <begin position="1"/>
        <end position="1063"/>
    </location>
</feature>
<feature type="domain" description="Kinesin motor" evidence="2">
    <location>
        <begin position="18"/>
        <end position="342"/>
    </location>
</feature>
<feature type="region of interest" description="Disordered" evidence="3">
    <location>
        <begin position="574"/>
        <end position="664"/>
    </location>
</feature>
<feature type="coiled-coil region" evidence="1">
    <location>
        <begin position="351"/>
        <end position="436"/>
    </location>
</feature>
<feature type="binding site" evidence="2">
    <location>
        <begin position="106"/>
        <end position="113"/>
    </location>
    <ligand>
        <name>ATP</name>
        <dbReference type="ChEBI" id="CHEBI:30616"/>
    </ligand>
</feature>
<evidence type="ECO:0000255" key="1"/>
<evidence type="ECO:0000255" key="2">
    <source>
        <dbReference type="PROSITE-ProRule" id="PRU00283"/>
    </source>
</evidence>
<evidence type="ECO:0000256" key="3">
    <source>
        <dbReference type="SAM" id="MobiDB-lite"/>
    </source>
</evidence>
<evidence type="ECO:0000303" key="4">
    <source>
    </source>
</evidence>
<evidence type="ECO:0000305" key="5"/>
<evidence type="ECO:0000312" key="6">
    <source>
        <dbReference type="Araport" id="AT5G66310"/>
    </source>
</evidence>
<evidence type="ECO:0000312" key="7">
    <source>
        <dbReference type="EMBL" id="BAB10710.1"/>
    </source>
</evidence>
<comment type="similarity">
    <text evidence="4">Belongs to the TRAFAC class myosin-kinesin ATPase superfamily. Kinesin family. KIN-7 subfamily.</text>
</comment>
<comment type="sequence caution" evidence="5">
    <conflict type="erroneous gene model prediction">
        <sequence resource="EMBL-CDS" id="BAB10710"/>
    </conflict>
</comment>
<keyword id="KW-0067">ATP-binding</keyword>
<keyword id="KW-0175">Coiled coil</keyword>
<keyword id="KW-0493">Microtubule</keyword>
<keyword id="KW-0505">Motor protein</keyword>
<keyword id="KW-0547">Nucleotide-binding</keyword>
<keyword id="KW-1185">Reference proteome</keyword>
<accession>F4JZ68</accession>
<accession>Q94JU6</accession>
<accession>Q9FH58</accession>
<reference key="1">
    <citation type="journal article" date="2000" name="DNA Res.">
        <title>Structural analysis of Arabidopsis thaliana chromosome 5. X. Sequence features of the regions of 3,076,755 bp covered by sixty P1 and TAC clones.</title>
        <authorList>
            <person name="Sato S."/>
            <person name="Nakamura Y."/>
            <person name="Kaneko T."/>
            <person name="Katoh T."/>
            <person name="Asamizu E."/>
            <person name="Kotani H."/>
            <person name="Tabata S."/>
        </authorList>
    </citation>
    <scope>NUCLEOTIDE SEQUENCE [LARGE SCALE GENOMIC DNA]</scope>
    <source>
        <strain>cv. Columbia</strain>
    </source>
</reference>
<reference key="2">
    <citation type="journal article" date="2017" name="Plant J.">
        <title>Araport11: a complete reannotation of the Arabidopsis thaliana reference genome.</title>
        <authorList>
            <person name="Cheng C.Y."/>
            <person name="Krishnakumar V."/>
            <person name="Chan A.P."/>
            <person name="Thibaud-Nissen F."/>
            <person name="Schobel S."/>
            <person name="Town C.D."/>
        </authorList>
    </citation>
    <scope>GENOME REANNOTATION</scope>
    <source>
        <strain>cv. Columbia</strain>
    </source>
</reference>
<reference key="3">
    <citation type="journal article" date="2003" name="Science">
        <title>Empirical analysis of transcriptional activity in the Arabidopsis genome.</title>
        <authorList>
            <person name="Yamada K."/>
            <person name="Lim J."/>
            <person name="Dale J.M."/>
            <person name="Chen H."/>
            <person name="Shinn P."/>
            <person name="Palm C.J."/>
            <person name="Southwick A.M."/>
            <person name="Wu H.C."/>
            <person name="Kim C.J."/>
            <person name="Nguyen M."/>
            <person name="Pham P.K."/>
            <person name="Cheuk R.F."/>
            <person name="Karlin-Newmann G."/>
            <person name="Liu S.X."/>
            <person name="Lam B."/>
            <person name="Sakano H."/>
            <person name="Wu T."/>
            <person name="Yu G."/>
            <person name="Miranda M."/>
            <person name="Quach H.L."/>
            <person name="Tripp M."/>
            <person name="Chang C.H."/>
            <person name="Lee J.M."/>
            <person name="Toriumi M.J."/>
            <person name="Chan M.M."/>
            <person name="Tang C.C."/>
            <person name="Onodera C.S."/>
            <person name="Deng J.M."/>
            <person name="Akiyama K."/>
            <person name="Ansari Y."/>
            <person name="Arakawa T."/>
            <person name="Banh J."/>
            <person name="Banno F."/>
            <person name="Bowser L."/>
            <person name="Brooks S.Y."/>
            <person name="Carninci P."/>
            <person name="Chao Q."/>
            <person name="Choy N."/>
            <person name="Enju A."/>
            <person name="Goldsmith A.D."/>
            <person name="Gurjal M."/>
            <person name="Hansen N.F."/>
            <person name="Hayashizaki Y."/>
            <person name="Johnson-Hopson C."/>
            <person name="Hsuan V.W."/>
            <person name="Iida K."/>
            <person name="Karnes M."/>
            <person name="Khan S."/>
            <person name="Koesema E."/>
            <person name="Ishida J."/>
            <person name="Jiang P.X."/>
            <person name="Jones T."/>
            <person name="Kawai J."/>
            <person name="Kamiya A."/>
            <person name="Meyers C."/>
            <person name="Nakajima M."/>
            <person name="Narusaka M."/>
            <person name="Seki M."/>
            <person name="Sakurai T."/>
            <person name="Satou M."/>
            <person name="Tamse R."/>
            <person name="Vaysberg M."/>
            <person name="Wallender E.K."/>
            <person name="Wong C."/>
            <person name="Yamamura Y."/>
            <person name="Yuan S."/>
            <person name="Shinozaki K."/>
            <person name="Davis R.W."/>
            <person name="Theologis A."/>
            <person name="Ecker J.R."/>
        </authorList>
    </citation>
    <scope>NUCLEOTIDE SEQUENCE [LARGE SCALE MRNA] OF 1-425</scope>
    <source>
        <strain>cv. Columbia</strain>
    </source>
</reference>
<reference key="4">
    <citation type="journal article" date="2001" name="BMC Genomics">
        <title>Kinesins in the Arabidopsis genome: a comparative analysis among eukaryotes.</title>
        <authorList>
            <person name="Reddy A.S."/>
            <person name="Day I.S."/>
        </authorList>
    </citation>
    <scope>GENE FAMILY</scope>
</reference>
<reference key="5">
    <citation type="journal article" date="2006" name="BMC Genomics">
        <title>Comprehensive comparative analysis of kinesins in photosynthetic eukaryotes.</title>
        <authorList>
            <person name="Richardson D.N."/>
            <person name="Simmons M.P."/>
            <person name="Reddy A.S."/>
        </authorList>
    </citation>
    <scope>GENE FAMILY</scope>
    <scope>NOMENCLATURE</scope>
</reference>
<reference key="6">
    <citation type="journal article" date="2012" name="Protoplasma">
        <title>Functions of the Arabidopsis kinesin superfamily of microtubule-based motor proteins.</title>
        <authorList>
            <person name="Zhu C."/>
            <person name="Dixit R."/>
        </authorList>
    </citation>
    <scope>REVIEW</scope>
</reference>
<sequence length="1063" mass="121424">MTTEDDDQMLGPSGTQEKIYVSVRMRPLNDKEKFRNDVPDWECINNTTIIYRSHLSISERSMYPSAYTFDRVFSPECCTRQVYEQGAKEVAFSVVSGVNASVFAYGQTSSGKTYTMSGITDCALVDIYGYIDKHKEREFILKFSAMEIYNESVRDLLSTDTSPLRLLDDPEKGTVVEKLTEETLRDWNHFKELLSVCKAQRQIGETALNEVSSRSHQILRLTVESIAREFSTNDKFSTLTATVNFIDLAGSERASQSLSAGTRLKEGCHINRSLLTLGTVIRKLSKEKTGHIPFRDSKLTRILQSSLGGNARTAIICTMSPARIHVEQSRNTLLFASCAKEVTTNAQVNVVMSDKALVKHLQRELAKLESELRSPSQASIVSDTTALLTEKDLEVEKLKKEVFQLAQQLEQARSEIKDLRRMVEEEKNQEKETLSTETEGLNVLMEHQYPKLRVRRTWDSENTTPLSPISAHRSSISPRSTEYSYEENVFQLSDFRIDSASSSPQQLAFVTPFLKVPLDDIHVTDTVDQSHVHKEEAIEEPHVQEERFYEMAEHTDGNSEDNCREVRCIETEKSDISIGPVENMPESSPDKYEAVTAEEPVSVTEPKNLQHPTEEAVCVTETKNLQHPTEAENEEEEEEERVKEVSGASPEPKQESNLTKNPALCDLECSPDEFDTSMSNLSRISTPPALITPSPEKPFSWIMERDSQLFRGMKLTRSRSCRPSLLSSPSSSWLEKDADTPPSWYDKEFIKTAERNLTMCDIKNQRLLQDEFSGRSMPTTWFERSLSDTQTVDAASHGVSNEMSPNESPFRPSDASVFELQTSGRASISQDRTEETAAQKDKQIIHRSMEEREQKFLASNSTKSFKDAAMDPIQDYLDTALNWPVEFKRLQREIIELWHVCKVSMAHRSYFFLLFRGDQKDCLYLEVELRRLKYIRESFAQNSNDGNNMTLISCTRALTRERYKLSKLMQRKLSKEERENLFLRWGIGLNTNHRRVQLARRLWSDYKDMGHVRESASLVGKLNGFVDMKLTSTEMFGVNYAFRPPRPKKSSLWKRSVLSLSFL</sequence>